<feature type="chain" id="PRO_0000108393" description="Cytochrome c-551">
    <location>
        <begin position="1"/>
        <end position="79"/>
    </location>
</feature>
<feature type="region of interest" description="Disordered" evidence="1">
    <location>
        <begin position="1"/>
        <end position="35"/>
    </location>
</feature>
<feature type="compositionally biased region" description="Polar residues" evidence="1">
    <location>
        <begin position="1"/>
        <end position="14"/>
    </location>
</feature>
<feature type="binding site" description="covalent">
    <location>
        <position position="14"/>
    </location>
    <ligand>
        <name>heme c</name>
        <dbReference type="ChEBI" id="CHEBI:61717"/>
    </ligand>
</feature>
<feature type="binding site" description="covalent">
    <location>
        <position position="17"/>
    </location>
    <ligand>
        <name>heme c</name>
        <dbReference type="ChEBI" id="CHEBI:61717"/>
    </ligand>
</feature>
<feature type="binding site" description="axial binding residue">
    <location>
        <position position="18"/>
    </location>
    <ligand>
        <name>heme c</name>
        <dbReference type="ChEBI" id="CHEBI:61717"/>
    </ligand>
    <ligandPart>
        <name>Fe</name>
        <dbReference type="ChEBI" id="CHEBI:18248"/>
    </ligandPart>
</feature>
<feature type="binding site" description="axial binding residue">
    <location>
        <position position="55"/>
    </location>
    <ligand>
        <name>heme c</name>
        <dbReference type="ChEBI" id="CHEBI:61717"/>
    </ligand>
    <ligandPart>
        <name>Fe</name>
        <dbReference type="ChEBI" id="CHEBI:18248"/>
    </ligandPart>
</feature>
<accession>P38587</accession>
<proteinExistence type="evidence at protein level"/>
<sequence>DGQSIYESGTSPTCASCHDRGTAGAPKINEPGDWDGIDLDAEALVDSTMDGKGAMPAYDGRADRDEVKEAVEYMLSTIE</sequence>
<evidence type="ECO:0000256" key="1">
    <source>
        <dbReference type="SAM" id="MobiDB-lite"/>
    </source>
</evidence>
<organism>
    <name type="scientific">Halorhodospira halochloris</name>
    <name type="common">Ectothiorhodospira halochloris</name>
    <dbReference type="NCBI Taxonomy" id="1052"/>
    <lineage>
        <taxon>Bacteria</taxon>
        <taxon>Pseudomonadati</taxon>
        <taxon>Pseudomonadota</taxon>
        <taxon>Gammaproteobacteria</taxon>
        <taxon>Chromatiales</taxon>
        <taxon>Ectothiorhodospiraceae</taxon>
        <taxon>Halorhodospira</taxon>
    </lineage>
</organism>
<dbReference type="PIR" id="S38756">
    <property type="entry name" value="S38756"/>
</dbReference>
<dbReference type="SMR" id="P38587"/>
<dbReference type="GO" id="GO:0009055">
    <property type="term" value="F:electron transfer activity"/>
    <property type="evidence" value="ECO:0007669"/>
    <property type="project" value="InterPro"/>
</dbReference>
<dbReference type="GO" id="GO:0020037">
    <property type="term" value="F:heme binding"/>
    <property type="evidence" value="ECO:0007669"/>
    <property type="project" value="InterPro"/>
</dbReference>
<dbReference type="GO" id="GO:0005506">
    <property type="term" value="F:iron ion binding"/>
    <property type="evidence" value="ECO:0007669"/>
    <property type="project" value="InterPro"/>
</dbReference>
<dbReference type="Gene3D" id="1.10.760.10">
    <property type="entry name" value="Cytochrome c-like domain"/>
    <property type="match status" value="1"/>
</dbReference>
<dbReference type="InterPro" id="IPR009056">
    <property type="entry name" value="Cyt_c-like_dom"/>
</dbReference>
<dbReference type="InterPro" id="IPR036909">
    <property type="entry name" value="Cyt_c-like_dom_sf"/>
</dbReference>
<dbReference type="InterPro" id="IPR002323">
    <property type="entry name" value="Cyt_CIE"/>
</dbReference>
<dbReference type="Pfam" id="PF13442">
    <property type="entry name" value="Cytochrome_CBB3"/>
    <property type="match status" value="1"/>
</dbReference>
<dbReference type="PRINTS" id="PR00607">
    <property type="entry name" value="CYTCHROMECIE"/>
</dbReference>
<dbReference type="SUPFAM" id="SSF46626">
    <property type="entry name" value="Cytochrome c"/>
    <property type="match status" value="1"/>
</dbReference>
<dbReference type="PROSITE" id="PS51007">
    <property type="entry name" value="CYTC"/>
    <property type="match status" value="1"/>
</dbReference>
<reference key="1">
    <citation type="journal article" date="1993" name="Arch. Biochem. Biophys.">
        <title>Amino acid sequences of cytochromes c-551 from the halophilic purple phototrophic bacteria, Ectothiorhodospira halophila and E. halochloris.</title>
        <authorList>
            <person name="Ambler R.P."/>
            <person name="Meyer T.E."/>
            <person name="Kamen M.D."/>
        </authorList>
    </citation>
    <scope>PROTEIN SEQUENCE</scope>
</reference>
<comment type="PTM">
    <text>Binds 1 heme c group covalently per subunit.</text>
</comment>
<protein>
    <recommendedName>
        <fullName>Cytochrome c-551</fullName>
    </recommendedName>
    <alternativeName>
        <fullName>Cytochrome c551</fullName>
    </alternativeName>
</protein>
<keyword id="KW-0903">Direct protein sequencing</keyword>
<keyword id="KW-0249">Electron transport</keyword>
<keyword id="KW-0349">Heme</keyword>
<keyword id="KW-0408">Iron</keyword>
<keyword id="KW-0479">Metal-binding</keyword>
<keyword id="KW-0813">Transport</keyword>
<name>CY551_HALHR</name>